<sequence length="67" mass="7257">ECENTECPRACPGEYEFDEDGCNTCVCKGCDDAQCRCSSDANGCESFCTCNTRCSAADECNPRCTCK</sequence>
<evidence type="ECO:0000250" key="1"/>
<evidence type="ECO:0000255" key="2">
    <source>
        <dbReference type="PROSITE-ProRule" id="PRU00582"/>
    </source>
</evidence>
<evidence type="ECO:0000269" key="3">
    <source>
    </source>
</evidence>
<evidence type="ECO:0000305" key="4"/>
<feature type="chain" id="PRO_0000155198" description="Theromin">
    <location>
        <begin position="1"/>
        <end position="67"/>
    </location>
</feature>
<feature type="domain" description="Antistasin-like" evidence="2">
    <location>
        <begin position="2"/>
        <end position="27"/>
    </location>
</feature>
<feature type="site" description="Reactive bond" evidence="1">
    <location>
        <begin position="36"/>
        <end position="37"/>
    </location>
</feature>
<proteinExistence type="evidence at protein level"/>
<comment type="function">
    <text evidence="3">Potent thrombin-specific inhibitor.</text>
</comment>
<comment type="subunit">
    <text>Homodimer.</text>
</comment>
<comment type="subcellular location">
    <subcellularLocation>
        <location>Secreted</location>
    </subcellularLocation>
</comment>
<comment type="PTM">
    <text>Eight disulfide bonds are present.</text>
</comment>
<comment type="mass spectrometry" mass="14491.0" method="MALDI" evidence="3"/>
<comment type="similarity">
    <text evidence="4">Belongs to the protease inhibitor I15 (antistasin) family.</text>
</comment>
<protein>
    <recommendedName>
        <fullName>Theromin</fullName>
    </recommendedName>
    <alternativeName>
        <fullName>Thrombin inhibitor</fullName>
    </alternativeName>
</protein>
<keyword id="KW-0903">Direct protein sequencing</keyword>
<keyword id="KW-1015">Disulfide bond</keyword>
<keyword id="KW-0646">Protease inhibitor</keyword>
<keyword id="KW-0964">Secreted</keyword>
<keyword id="KW-0722">Serine protease inhibitor</keyword>
<organism>
    <name type="scientific">Theromyzon tessulatum</name>
    <name type="common">Duck leech</name>
    <dbReference type="NCBI Taxonomy" id="13286"/>
    <lineage>
        <taxon>Eukaryota</taxon>
        <taxon>Metazoa</taxon>
        <taxon>Spiralia</taxon>
        <taxon>Lophotrochozoa</taxon>
        <taxon>Annelida</taxon>
        <taxon>Clitellata</taxon>
        <taxon>Hirudinea</taxon>
        <taxon>Rhynchobdellida</taxon>
        <taxon>Glossiphoniidae</taxon>
        <taxon>Theromyzon</taxon>
    </lineage>
</organism>
<accession>P82354</accession>
<name>THBI_THETS</name>
<reference key="1">
    <citation type="journal article" date="2000" name="J. Biol. Chem.">
        <title>Theromin, a novel leech thrombin inhibitor.</title>
        <authorList>
            <person name="Salzet M."/>
            <person name="Chopin V."/>
            <person name="Baert J.-L."/>
            <person name="Matias I."/>
            <person name="Malecha J."/>
        </authorList>
    </citation>
    <scope>PROTEIN SEQUENCE</scope>
    <scope>FUNCTION</scope>
    <scope>MASS SPECTROMETRY</scope>
    <source>
        <tissue>Head</tissue>
    </source>
</reference>
<dbReference type="SMR" id="P82354"/>
<dbReference type="MEROPS" id="I15.003"/>
<dbReference type="GO" id="GO:0005576">
    <property type="term" value="C:extracellular region"/>
    <property type="evidence" value="ECO:0007669"/>
    <property type="project" value="UniProtKB-SubCell"/>
</dbReference>
<dbReference type="GO" id="GO:0004867">
    <property type="term" value="F:serine-type endopeptidase inhibitor activity"/>
    <property type="evidence" value="ECO:0007669"/>
    <property type="project" value="UniProtKB-KW"/>
</dbReference>
<dbReference type="InterPro" id="IPR004094">
    <property type="entry name" value="Antistasin-like"/>
</dbReference>
<dbReference type="PROSITE" id="PS51252">
    <property type="entry name" value="ANTISTASIN"/>
    <property type="match status" value="1"/>
</dbReference>